<feature type="chain" id="PRO_0000302106" description="Unknown protein 7">
    <location>
        <begin position="1" status="less than"/>
        <end position="12" status="greater than"/>
    </location>
</feature>
<feature type="unsure residue" description="I or L" evidence="1">
    <location>
        <position position="7"/>
    </location>
</feature>
<feature type="unsure residue" description="I or L" evidence="1">
    <location>
        <position position="8"/>
    </location>
</feature>
<feature type="unsure residue" description="I or L" evidence="1">
    <location>
        <position position="10"/>
    </location>
</feature>
<feature type="non-consecutive residues" evidence="2">
    <location>
        <begin position="4"/>
        <end position="5"/>
    </location>
</feature>
<feature type="non-terminal residue" evidence="2">
    <location>
        <position position="1"/>
    </location>
</feature>
<feature type="non-terminal residue" evidence="2">
    <location>
        <position position="12"/>
    </location>
</feature>
<evidence type="ECO:0000269" key="1">
    <source>
    </source>
</evidence>
<evidence type="ECO:0000303" key="2">
    <source>
    </source>
</evidence>
<evidence type="ECO:0000305" key="3"/>
<comment type="caution">
    <text evidence="1">The order of the peptides shown is unknown.</text>
</comment>
<name>UP07_LONON</name>
<organism>
    <name type="scientific">Lonomia obliqua</name>
    <name type="common">Moth</name>
    <dbReference type="NCBI Taxonomy" id="304329"/>
    <lineage>
        <taxon>Eukaryota</taxon>
        <taxon>Metazoa</taxon>
        <taxon>Ecdysozoa</taxon>
        <taxon>Arthropoda</taxon>
        <taxon>Hexapoda</taxon>
        <taxon>Insecta</taxon>
        <taxon>Pterygota</taxon>
        <taxon>Neoptera</taxon>
        <taxon>Endopterygota</taxon>
        <taxon>Lepidoptera</taxon>
        <taxon>Glossata</taxon>
        <taxon>Ditrysia</taxon>
        <taxon>Bombycoidea</taxon>
        <taxon>Saturniidae</taxon>
        <taxon>Hemileucinae</taxon>
        <taxon>Lonomia</taxon>
    </lineage>
</organism>
<keyword id="KW-0903">Direct protein sequencing</keyword>
<reference evidence="3" key="1">
    <citation type="journal article" date="2008" name="Toxicon">
        <title>Immunochemical and proteomic technologies as tools for unravelling toxins involved in envenoming by accidental contact with Lonomia obliqua caterpillars.</title>
        <authorList>
            <person name="Ricci-Silva M.E."/>
            <person name="Valente R.H."/>
            <person name="Leon I.R."/>
            <person name="Tambourgi D.V."/>
            <person name="Ramos O.H.P."/>
            <person name="Perales J."/>
            <person name="Chudzinski-Tavassi A.M."/>
        </authorList>
    </citation>
    <scope>PROTEIN SEQUENCE</scope>
    <source>
        <tissue evidence="1">Larval bristle</tissue>
    </source>
</reference>
<proteinExistence type="evidence at protein level"/>
<sequence length="12" mass="1370">QESGEVIIEIPR</sequence>
<accession>P85252</accession>
<protein>
    <recommendedName>
        <fullName>Unknown protein 7</fullName>
    </recommendedName>
</protein>